<protein>
    <recommendedName>
        <fullName evidence="1">Phosphoribosylaminoimidazole-succinocarboxamide synthase</fullName>
        <ecNumber evidence="1">6.3.2.6</ecNumber>
    </recommendedName>
    <alternativeName>
        <fullName evidence="1">SAICAR synthetase</fullName>
    </alternativeName>
</protein>
<organism>
    <name type="scientific">Streptococcus sanguinis (strain SK36)</name>
    <dbReference type="NCBI Taxonomy" id="388919"/>
    <lineage>
        <taxon>Bacteria</taxon>
        <taxon>Bacillati</taxon>
        <taxon>Bacillota</taxon>
        <taxon>Bacilli</taxon>
        <taxon>Lactobacillales</taxon>
        <taxon>Streptococcaceae</taxon>
        <taxon>Streptococcus</taxon>
    </lineage>
</organism>
<keyword id="KW-0067">ATP-binding</keyword>
<keyword id="KW-0436">Ligase</keyword>
<keyword id="KW-0547">Nucleotide-binding</keyword>
<keyword id="KW-0658">Purine biosynthesis</keyword>
<keyword id="KW-1185">Reference proteome</keyword>
<accession>A3CJZ1</accession>
<reference key="1">
    <citation type="journal article" date="2007" name="J. Bacteriol.">
        <title>Genome of the opportunistic pathogen Streptococcus sanguinis.</title>
        <authorList>
            <person name="Xu P."/>
            <person name="Alves J.M."/>
            <person name="Kitten T."/>
            <person name="Brown A."/>
            <person name="Chen Z."/>
            <person name="Ozaki L.S."/>
            <person name="Manque P."/>
            <person name="Ge X."/>
            <person name="Serrano M.G."/>
            <person name="Puiu D."/>
            <person name="Hendricks S."/>
            <person name="Wang Y."/>
            <person name="Chaplin M.D."/>
            <person name="Akan D."/>
            <person name="Paik S."/>
            <person name="Peterson D.L."/>
            <person name="Macrina F.L."/>
            <person name="Buck G.A."/>
        </authorList>
    </citation>
    <scope>NUCLEOTIDE SEQUENCE [LARGE SCALE GENOMIC DNA]</scope>
    <source>
        <strain>SK36</strain>
    </source>
</reference>
<dbReference type="EC" id="6.3.2.6" evidence="1"/>
<dbReference type="EMBL" id="CP000387">
    <property type="protein sequence ID" value="ABN43496.1"/>
    <property type="molecule type" value="Genomic_DNA"/>
</dbReference>
<dbReference type="RefSeq" id="WP_002894328.1">
    <property type="nucleotide sequence ID" value="NC_009009.1"/>
</dbReference>
<dbReference type="RefSeq" id="YP_001034046.1">
    <property type="nucleotide sequence ID" value="NC_009009.1"/>
</dbReference>
<dbReference type="SMR" id="A3CJZ1"/>
<dbReference type="STRING" id="388919.SSA_0028"/>
<dbReference type="KEGG" id="ssa:SSA_0028"/>
<dbReference type="PATRIC" id="fig|388919.9.peg.26"/>
<dbReference type="eggNOG" id="COG0152">
    <property type="taxonomic scope" value="Bacteria"/>
</dbReference>
<dbReference type="HOGENOM" id="CLU_061495_2_0_9"/>
<dbReference type="OrthoDB" id="9801549at2"/>
<dbReference type="UniPathway" id="UPA00074">
    <property type="reaction ID" value="UER00131"/>
</dbReference>
<dbReference type="Proteomes" id="UP000002148">
    <property type="component" value="Chromosome"/>
</dbReference>
<dbReference type="GO" id="GO:0005524">
    <property type="term" value="F:ATP binding"/>
    <property type="evidence" value="ECO:0007669"/>
    <property type="project" value="UniProtKB-KW"/>
</dbReference>
<dbReference type="GO" id="GO:0004639">
    <property type="term" value="F:phosphoribosylaminoimidazolesuccinocarboxamide synthase activity"/>
    <property type="evidence" value="ECO:0007669"/>
    <property type="project" value="UniProtKB-UniRule"/>
</dbReference>
<dbReference type="GO" id="GO:0006189">
    <property type="term" value="P:'de novo' IMP biosynthetic process"/>
    <property type="evidence" value="ECO:0007669"/>
    <property type="project" value="UniProtKB-UniRule"/>
</dbReference>
<dbReference type="GO" id="GO:0009236">
    <property type="term" value="P:cobalamin biosynthetic process"/>
    <property type="evidence" value="ECO:0007669"/>
    <property type="project" value="InterPro"/>
</dbReference>
<dbReference type="CDD" id="cd01415">
    <property type="entry name" value="SAICAR_synt_PurC"/>
    <property type="match status" value="1"/>
</dbReference>
<dbReference type="FunFam" id="3.30.200.20:FF:000189">
    <property type="entry name" value="Phosphoribosylaminoimidazole-succinocarboxamide synthase"/>
    <property type="match status" value="1"/>
</dbReference>
<dbReference type="FunFam" id="3.30.470.20:FF:000006">
    <property type="entry name" value="Phosphoribosylaminoimidazole-succinocarboxamide synthase"/>
    <property type="match status" value="1"/>
</dbReference>
<dbReference type="Gene3D" id="3.30.470.20">
    <property type="entry name" value="ATP-grasp fold, B domain"/>
    <property type="match status" value="1"/>
</dbReference>
<dbReference type="Gene3D" id="3.30.200.20">
    <property type="entry name" value="Phosphorylase Kinase, domain 1"/>
    <property type="match status" value="1"/>
</dbReference>
<dbReference type="HAMAP" id="MF_00137">
    <property type="entry name" value="SAICAR_synth"/>
    <property type="match status" value="1"/>
</dbReference>
<dbReference type="InterPro" id="IPR028923">
    <property type="entry name" value="SAICAR_synt/ADE2_N"/>
</dbReference>
<dbReference type="InterPro" id="IPR033934">
    <property type="entry name" value="SAICAR_synt_PurC"/>
</dbReference>
<dbReference type="InterPro" id="IPR001636">
    <property type="entry name" value="SAICAR_synth"/>
</dbReference>
<dbReference type="InterPro" id="IPR050089">
    <property type="entry name" value="SAICAR_synthetase"/>
</dbReference>
<dbReference type="InterPro" id="IPR018236">
    <property type="entry name" value="SAICAR_synthetase_CS"/>
</dbReference>
<dbReference type="NCBIfam" id="TIGR00081">
    <property type="entry name" value="purC"/>
    <property type="match status" value="1"/>
</dbReference>
<dbReference type="PANTHER" id="PTHR43599">
    <property type="entry name" value="MULTIFUNCTIONAL PROTEIN ADE2"/>
    <property type="match status" value="1"/>
</dbReference>
<dbReference type="PANTHER" id="PTHR43599:SF3">
    <property type="entry name" value="SI:DKEY-6E2.2"/>
    <property type="match status" value="1"/>
</dbReference>
<dbReference type="Pfam" id="PF01259">
    <property type="entry name" value="SAICAR_synt"/>
    <property type="match status" value="1"/>
</dbReference>
<dbReference type="SUPFAM" id="SSF56104">
    <property type="entry name" value="SAICAR synthase-like"/>
    <property type="match status" value="1"/>
</dbReference>
<dbReference type="PROSITE" id="PS01057">
    <property type="entry name" value="SAICAR_SYNTHETASE_1"/>
    <property type="match status" value="1"/>
</dbReference>
<dbReference type="PROSITE" id="PS01058">
    <property type="entry name" value="SAICAR_SYNTHETASE_2"/>
    <property type="match status" value="1"/>
</dbReference>
<evidence type="ECO:0000255" key="1">
    <source>
        <dbReference type="HAMAP-Rule" id="MF_00137"/>
    </source>
</evidence>
<name>PUR7_STRSV</name>
<feature type="chain" id="PRO_1000018794" description="Phosphoribosylaminoimidazole-succinocarboxamide synthase">
    <location>
        <begin position="1"/>
        <end position="235"/>
    </location>
</feature>
<sequence length="235" mass="26922">MSNKLLYSGKAKDIFSTDDEQVILARYKDQATAFNGVKKEQIAGKGVLNNQISSFIFEKLNAAGVATHFIGKVSDTDQLNKKVEIIPLEVVLRNYTAGSFSKRFGVEEGIALETPIVEFYYKNDDLDDPFINDEHVKFLKIASDQEIAFLKEETRRINKLLSDWFRQIGLKLIDFKLEFGFDKDGKIILADEFSPDNCRLWDAEGHHMDKDVFRRGLGELTDVYQVVWEKLQAIK</sequence>
<comment type="catalytic activity">
    <reaction evidence="1">
        <text>5-amino-1-(5-phospho-D-ribosyl)imidazole-4-carboxylate + L-aspartate + ATP = (2S)-2-[5-amino-1-(5-phospho-beta-D-ribosyl)imidazole-4-carboxamido]succinate + ADP + phosphate + 2 H(+)</text>
        <dbReference type="Rhea" id="RHEA:22628"/>
        <dbReference type="ChEBI" id="CHEBI:15378"/>
        <dbReference type="ChEBI" id="CHEBI:29991"/>
        <dbReference type="ChEBI" id="CHEBI:30616"/>
        <dbReference type="ChEBI" id="CHEBI:43474"/>
        <dbReference type="ChEBI" id="CHEBI:58443"/>
        <dbReference type="ChEBI" id="CHEBI:77657"/>
        <dbReference type="ChEBI" id="CHEBI:456216"/>
        <dbReference type="EC" id="6.3.2.6"/>
    </reaction>
</comment>
<comment type="pathway">
    <text evidence="1">Purine metabolism; IMP biosynthesis via de novo pathway; 5-amino-1-(5-phospho-D-ribosyl)imidazole-4-carboxamide from 5-amino-1-(5-phospho-D-ribosyl)imidazole-4-carboxylate: step 1/2.</text>
</comment>
<comment type="similarity">
    <text evidence="1">Belongs to the SAICAR synthetase family.</text>
</comment>
<gene>
    <name evidence="1" type="primary">purC</name>
    <name type="ordered locus">SSA_0028</name>
</gene>
<proteinExistence type="inferred from homology"/>